<sequence>MATGSAQSSFPSHLKKTNGSHGTNGALVQSPSNQSALGAGGTNGNGGVARVWGVATSSSSGLAHCSVGGGDGKMDNMIGDGRSQNCWGASNSNAGINLNLNPNANPAAWPVLGHEGTVATGNPSSICSPVSAIGQNMGSQNGNPVGALGAWGNLLPQESAEPQTSTSQNVSFSVQPQNLNTDGPNNTNPMNSSPNPINAMQTNGLPNWGMAVGMGAIIPPHLQGLPGANGSSVSQGSGSGGEGMGSSVWGLSPGNPATGSTNCGFSQGNGDTVNSALSAKQNGSSSAVQKEGNGGNAWDSGPPAGPGILAWGRGSGTNGIGNIHSGAWGHPSRSSSNGVNGEWGKPPNQHSSSDISGKGSTGWDSASAASQTPALQPGSEHMNSWAKATSSGTTASEGSSDGSGNHNEGSTGREGTGEGRRRDKGVLDQGHIQLPRNDLDPRVLSNSGWGQTPVKQNTAWEFEESPRSERKNDNGTEAWGSIATQPSNSGGKTDGSIMNSTNTSSVSGWVSSPPAAVPANTSWGDSNNKAPSGPGVWGDSISSTAVNNAAATKSGHAWSGTVNQEDKSPTWGEPQKPKSQNWGDGQRANPAWSTGAGDWADSSSVLGHLGDGKKNGSGWDADGNRSGSGWNDATRCGTSGWGSGTNAKVNPGTNWGESLKPGPQQNWAHKPQDNNVSNWGGAASVKQTGTGWIGGPLPVKQKDSSEATGWEEPSPPSIRRKMEIDDGTSAWGDPSTYNNKTVNMWDRNNPVIQSSTTAPATPTTPTSSSTTHRAETPPSHQAGTQLNRSPLLGPVSSGWGEMPSVHSKAENSWGEPSSPCTLVDNGTAAWGKPPSSGSGWDHPAEPVVPFGRASAPAAAPALCKPASKSMQEGWGSGADEMNLGTSQWEDEDGDMWNNAASQESSSSCSSWGNTSKKGLQKGMKTPGKQDEAWIMSRLIKQLTDMGFPREPAEEALKSNSMNLDQAMSALLEKKVDMDKRGLGMTDYNGMVTKPLGCRPPISKESSMDRPTFLDKLTLSFSNQDGGLVEEPTTSPFLPSPSLKLPLSNSALPSQALGGVASGLGMQNLNSSRQIPSGNLGVFGNSGAAQARTMQQPPVQPLNSSQPSLRAQVPQFLSPQVQAQLLQFAAKNIGLSPALLTSPINPQHMTMLNQLYQLQLAYQRLQIQQQMLQAQRNVSGPMRQQEQQVARTITNLQQQIQQHQRQLAQALLVKQPPPPPPPPHLSLHPSAGKSGMESFPPPPQAPGLPDLQTKEQQSSPNTFAPYPLAGLNPNMNVNSIDMSSGLSVKDPSQSQSRLPQWTHPNSMGNLSSAASPLDQNPSKHGAIPGGLSIGPPGKSSIDDSYGRYDLIQNSESPASPPVAVPHSWSRAKSDSDKISNGSSISWPPEFHPGVPWKGLQNIDPENDPDVTPGSVPTGPTINTTIQDVNRYLLKSGGKLSDIKSTWSSGPASHTQASLSHELWKVPRNTTAPTRPPPGLANPKPSSTWGTSPLGWTSSYSSGSAWSTDTSGRTSSWLVLRNLTPQIDGSTLRTLCLQHGPLITFHLNLTQGNAVVRYSSKEEAAKAQKSLHMCVLGNTTILAEFAGEEEVNRFLAQGQALPPTSSWQSSSGGSQPRLGTSGSTHGLVRSDTAHWNTPCLSGKGSSELLWGGVPQYSSSLWGPPSAEDARVIGSPTPLNTLLPGDLLSGESI</sequence>
<gene>
    <name type="primary">Tnrc6c</name>
    <name type="synonym">Kiaa1582</name>
</gene>
<reference key="1">
    <citation type="journal article" date="2005" name="Science">
        <title>The transcriptional landscape of the mammalian genome.</title>
        <authorList>
            <person name="Carninci P."/>
            <person name="Kasukawa T."/>
            <person name="Katayama S."/>
            <person name="Gough J."/>
            <person name="Frith M.C."/>
            <person name="Maeda N."/>
            <person name="Oyama R."/>
            <person name="Ravasi T."/>
            <person name="Lenhard B."/>
            <person name="Wells C."/>
            <person name="Kodzius R."/>
            <person name="Shimokawa K."/>
            <person name="Bajic V.B."/>
            <person name="Brenner S.E."/>
            <person name="Batalov S."/>
            <person name="Forrest A.R."/>
            <person name="Zavolan M."/>
            <person name="Davis M.J."/>
            <person name="Wilming L.G."/>
            <person name="Aidinis V."/>
            <person name="Allen J.E."/>
            <person name="Ambesi-Impiombato A."/>
            <person name="Apweiler R."/>
            <person name="Aturaliya R.N."/>
            <person name="Bailey T.L."/>
            <person name="Bansal M."/>
            <person name="Baxter L."/>
            <person name="Beisel K.W."/>
            <person name="Bersano T."/>
            <person name="Bono H."/>
            <person name="Chalk A.M."/>
            <person name="Chiu K.P."/>
            <person name="Choudhary V."/>
            <person name="Christoffels A."/>
            <person name="Clutterbuck D.R."/>
            <person name="Crowe M.L."/>
            <person name="Dalla E."/>
            <person name="Dalrymple B.P."/>
            <person name="de Bono B."/>
            <person name="Della Gatta G."/>
            <person name="di Bernardo D."/>
            <person name="Down T."/>
            <person name="Engstrom P."/>
            <person name="Fagiolini M."/>
            <person name="Faulkner G."/>
            <person name="Fletcher C.F."/>
            <person name="Fukushima T."/>
            <person name="Furuno M."/>
            <person name="Futaki S."/>
            <person name="Gariboldi M."/>
            <person name="Georgii-Hemming P."/>
            <person name="Gingeras T.R."/>
            <person name="Gojobori T."/>
            <person name="Green R.E."/>
            <person name="Gustincich S."/>
            <person name="Harbers M."/>
            <person name="Hayashi Y."/>
            <person name="Hensch T.K."/>
            <person name="Hirokawa N."/>
            <person name="Hill D."/>
            <person name="Huminiecki L."/>
            <person name="Iacono M."/>
            <person name="Ikeo K."/>
            <person name="Iwama A."/>
            <person name="Ishikawa T."/>
            <person name="Jakt M."/>
            <person name="Kanapin A."/>
            <person name="Katoh M."/>
            <person name="Kawasawa Y."/>
            <person name="Kelso J."/>
            <person name="Kitamura H."/>
            <person name="Kitano H."/>
            <person name="Kollias G."/>
            <person name="Krishnan S.P."/>
            <person name="Kruger A."/>
            <person name="Kummerfeld S.K."/>
            <person name="Kurochkin I.V."/>
            <person name="Lareau L.F."/>
            <person name="Lazarevic D."/>
            <person name="Lipovich L."/>
            <person name="Liu J."/>
            <person name="Liuni S."/>
            <person name="McWilliam S."/>
            <person name="Madan Babu M."/>
            <person name="Madera M."/>
            <person name="Marchionni L."/>
            <person name="Matsuda H."/>
            <person name="Matsuzawa S."/>
            <person name="Miki H."/>
            <person name="Mignone F."/>
            <person name="Miyake S."/>
            <person name="Morris K."/>
            <person name="Mottagui-Tabar S."/>
            <person name="Mulder N."/>
            <person name="Nakano N."/>
            <person name="Nakauchi H."/>
            <person name="Ng P."/>
            <person name="Nilsson R."/>
            <person name="Nishiguchi S."/>
            <person name="Nishikawa S."/>
            <person name="Nori F."/>
            <person name="Ohara O."/>
            <person name="Okazaki Y."/>
            <person name="Orlando V."/>
            <person name="Pang K.C."/>
            <person name="Pavan W.J."/>
            <person name="Pavesi G."/>
            <person name="Pesole G."/>
            <person name="Petrovsky N."/>
            <person name="Piazza S."/>
            <person name="Reed J."/>
            <person name="Reid J.F."/>
            <person name="Ring B.Z."/>
            <person name="Ringwald M."/>
            <person name="Rost B."/>
            <person name="Ruan Y."/>
            <person name="Salzberg S.L."/>
            <person name="Sandelin A."/>
            <person name="Schneider C."/>
            <person name="Schoenbach C."/>
            <person name="Sekiguchi K."/>
            <person name="Semple C.A."/>
            <person name="Seno S."/>
            <person name="Sessa L."/>
            <person name="Sheng Y."/>
            <person name="Shibata Y."/>
            <person name="Shimada H."/>
            <person name="Shimada K."/>
            <person name="Silva D."/>
            <person name="Sinclair B."/>
            <person name="Sperling S."/>
            <person name="Stupka E."/>
            <person name="Sugiura K."/>
            <person name="Sultana R."/>
            <person name="Takenaka Y."/>
            <person name="Taki K."/>
            <person name="Tammoja K."/>
            <person name="Tan S.L."/>
            <person name="Tang S."/>
            <person name="Taylor M.S."/>
            <person name="Tegner J."/>
            <person name="Teichmann S.A."/>
            <person name="Ueda H.R."/>
            <person name="van Nimwegen E."/>
            <person name="Verardo R."/>
            <person name="Wei C.L."/>
            <person name="Yagi K."/>
            <person name="Yamanishi H."/>
            <person name="Zabarovsky E."/>
            <person name="Zhu S."/>
            <person name="Zimmer A."/>
            <person name="Hide W."/>
            <person name="Bult C."/>
            <person name="Grimmond S.M."/>
            <person name="Teasdale R.D."/>
            <person name="Liu E.T."/>
            <person name="Brusic V."/>
            <person name="Quackenbush J."/>
            <person name="Wahlestedt C."/>
            <person name="Mattick J.S."/>
            <person name="Hume D.A."/>
            <person name="Kai C."/>
            <person name="Sasaki D."/>
            <person name="Tomaru Y."/>
            <person name="Fukuda S."/>
            <person name="Kanamori-Katayama M."/>
            <person name="Suzuki M."/>
            <person name="Aoki J."/>
            <person name="Arakawa T."/>
            <person name="Iida J."/>
            <person name="Imamura K."/>
            <person name="Itoh M."/>
            <person name="Kato T."/>
            <person name="Kawaji H."/>
            <person name="Kawagashira N."/>
            <person name="Kawashima T."/>
            <person name="Kojima M."/>
            <person name="Kondo S."/>
            <person name="Konno H."/>
            <person name="Nakano K."/>
            <person name="Ninomiya N."/>
            <person name="Nishio T."/>
            <person name="Okada M."/>
            <person name="Plessy C."/>
            <person name="Shibata K."/>
            <person name="Shiraki T."/>
            <person name="Suzuki S."/>
            <person name="Tagami M."/>
            <person name="Waki K."/>
            <person name="Watahiki A."/>
            <person name="Okamura-Oho Y."/>
            <person name="Suzuki H."/>
            <person name="Kawai J."/>
            <person name="Hayashizaki Y."/>
        </authorList>
    </citation>
    <scope>NUCLEOTIDE SEQUENCE [LARGE SCALE MRNA]</scope>
    <source>
        <strain>C57BL/6J</strain>
        <tissue>Brain</tissue>
        <tissue>Cerebellum</tissue>
        <tissue>Thymus</tissue>
    </source>
</reference>
<reference key="2">
    <citation type="journal article" date="2003" name="DNA Res.">
        <title>Prediction of the coding sequences of mouse homologues of KIAA gene: II. The complete nucleotide sequences of 400 mouse KIAA-homologous cDNAs identified by screening of terminal sequences of cDNA clones randomly sampled from size-fractionated libraries.</title>
        <authorList>
            <person name="Okazaki N."/>
            <person name="Kikuno R."/>
            <person name="Ohara R."/>
            <person name="Inamoto S."/>
            <person name="Aizawa H."/>
            <person name="Yuasa S."/>
            <person name="Nakajima D."/>
            <person name="Nagase T."/>
            <person name="Ohara O."/>
            <person name="Koga H."/>
        </authorList>
    </citation>
    <scope>NUCLEOTIDE SEQUENCE [LARGE SCALE MRNA] OF 329-1690</scope>
    <source>
        <tissue>Brain</tissue>
    </source>
</reference>
<reference key="3">
    <citation type="journal article" date="2007" name="Proc. Natl. Acad. Sci. U.S.A.">
        <title>Large-scale phosphorylation analysis of mouse liver.</title>
        <authorList>
            <person name="Villen J."/>
            <person name="Beausoleil S.A."/>
            <person name="Gerber S.A."/>
            <person name="Gygi S.P."/>
        </authorList>
    </citation>
    <scope>PHOSPHORYLATION [LARGE SCALE ANALYSIS] AT SER-465</scope>
    <scope>IDENTIFICATION BY MASS SPECTROMETRY [LARGE SCALE ANALYSIS]</scope>
    <source>
        <tissue>Liver</tissue>
    </source>
</reference>
<reference key="4">
    <citation type="journal article" date="2010" name="Cell">
        <title>A tissue-specific atlas of mouse protein phosphorylation and expression.</title>
        <authorList>
            <person name="Huttlin E.L."/>
            <person name="Jedrychowski M.P."/>
            <person name="Elias J.E."/>
            <person name="Goswami T."/>
            <person name="Rad R."/>
            <person name="Beausoleil S.A."/>
            <person name="Villen J."/>
            <person name="Haas W."/>
            <person name="Sowa M.E."/>
            <person name="Gygi S.P."/>
        </authorList>
    </citation>
    <scope>PHOSPHORYLATION [LARGE SCALE ANALYSIS] AT SER-465</scope>
    <scope>IDENTIFICATION BY MASS SPECTROMETRY [LARGE SCALE ANALYSIS]</scope>
    <source>
        <tissue>Kidney</tissue>
        <tissue>Spleen</tissue>
    </source>
</reference>
<reference key="5">
    <citation type="journal article" date="2014" name="Mol. Cell. Proteomics">
        <title>Immunoaffinity enrichment and mass spectrometry analysis of protein methylation.</title>
        <authorList>
            <person name="Guo A."/>
            <person name="Gu H."/>
            <person name="Zhou J."/>
            <person name="Mulhern D."/>
            <person name="Wang Y."/>
            <person name="Lee K.A."/>
            <person name="Yang V."/>
            <person name="Aguiar M."/>
            <person name="Kornhauser J."/>
            <person name="Jia X."/>
            <person name="Ren J."/>
            <person name="Beausoleil S.A."/>
            <person name="Silva J.C."/>
            <person name="Vemulapalli V."/>
            <person name="Bedford M.T."/>
            <person name="Comb M.J."/>
        </authorList>
    </citation>
    <scope>METHYLATION [LARGE SCALE ANALYSIS] AT ARG-313</scope>
    <scope>IDENTIFICATION BY MASS SPECTROMETRY [LARGE SCALE ANALYSIS]</scope>
    <source>
        <tissue>Embryo</tissue>
    </source>
</reference>
<accession>Q3UHC0</accession>
<accession>Q3UZ61</accession>
<accession>Q80TB6</accession>
<accession>Q8BXF9</accession>
<keyword id="KW-0175">Coiled coil</keyword>
<keyword id="KW-0488">Methylation</keyword>
<keyword id="KW-0597">Phosphoprotein</keyword>
<keyword id="KW-1185">Reference proteome</keyword>
<keyword id="KW-0694">RNA-binding</keyword>
<keyword id="KW-0943">RNA-mediated gene silencing</keyword>
<keyword id="KW-0810">Translation regulation</keyword>
<feature type="chain" id="PRO_0000278527" description="Trinucleotide repeat-containing gene 6C protein">
    <location>
        <begin position="1"/>
        <end position="1690"/>
    </location>
</feature>
<feature type="domain" description="UBA" evidence="4">
    <location>
        <begin position="928"/>
        <end position="973"/>
    </location>
</feature>
<feature type="domain" description="RRM">
    <location>
        <begin position="1565"/>
        <end position="1632"/>
    </location>
</feature>
<feature type="region of interest" description="Sufficient for interaction with argonaute family proteins" evidence="1">
    <location>
        <begin position="1"/>
        <end position="921"/>
    </location>
</feature>
<feature type="region of interest" description="Disordered" evidence="5">
    <location>
        <begin position="1"/>
        <end position="42"/>
    </location>
</feature>
<feature type="region of interest" description="Disordered" evidence="5">
    <location>
        <begin position="158"/>
        <end position="202"/>
    </location>
</feature>
<feature type="region of interest" description="Disordered" evidence="5">
    <location>
        <begin position="226"/>
        <end position="848"/>
    </location>
</feature>
<feature type="region of interest" description="Disordered" evidence="5">
    <location>
        <begin position="863"/>
        <end position="928"/>
    </location>
</feature>
<feature type="region of interest" description="Disordered" evidence="5">
    <location>
        <begin position="1212"/>
        <end position="1337"/>
    </location>
</feature>
<feature type="region of interest" description="Silencing domain; interaction with CNOT1 and PAN3" evidence="1">
    <location>
        <begin position="1260"/>
        <end position="1690"/>
    </location>
</feature>
<feature type="region of interest" description="Disordered" evidence="5">
    <location>
        <begin position="1351"/>
        <end position="1380"/>
    </location>
</feature>
<feature type="region of interest" description="Sufficient for translational repression when tethered to a target mRNA" evidence="1">
    <location>
        <begin position="1371"/>
        <end position="1690"/>
    </location>
</feature>
<feature type="region of interest" description="Required for interaction with PABPC1" evidence="1">
    <location>
        <begin position="1371"/>
        <end position="1417"/>
    </location>
</feature>
<feature type="region of interest" description="PABPC1-interacting motif-2 (PAM2)" evidence="1">
    <location>
        <begin position="1381"/>
        <end position="1399"/>
    </location>
</feature>
<feature type="region of interest" description="Disordered" evidence="5">
    <location>
        <begin position="1397"/>
        <end position="1421"/>
    </location>
</feature>
<feature type="region of interest" description="Disordered" evidence="5">
    <location>
        <begin position="1441"/>
        <end position="1486"/>
    </location>
</feature>
<feature type="region of interest" description="Interaction with the CCR4-NOT complex" evidence="1">
    <location>
        <begin position="1596"/>
        <end position="1690"/>
    </location>
</feature>
<feature type="region of interest" description="Disordered" evidence="5">
    <location>
        <begin position="1600"/>
        <end position="1625"/>
    </location>
</feature>
<feature type="coiled-coil region" evidence="3">
    <location>
        <begin position="1156"/>
        <end position="1214"/>
    </location>
</feature>
<feature type="compositionally biased region" description="Polar residues" evidence="5">
    <location>
        <begin position="1"/>
        <end position="12"/>
    </location>
</feature>
<feature type="compositionally biased region" description="Polar residues" evidence="5">
    <location>
        <begin position="19"/>
        <end position="36"/>
    </location>
</feature>
<feature type="compositionally biased region" description="Polar residues" evidence="5">
    <location>
        <begin position="160"/>
        <end position="183"/>
    </location>
</feature>
<feature type="compositionally biased region" description="Low complexity" evidence="5">
    <location>
        <begin position="184"/>
        <end position="198"/>
    </location>
</feature>
<feature type="compositionally biased region" description="Polar residues" evidence="5">
    <location>
        <begin position="255"/>
        <end position="288"/>
    </location>
</feature>
<feature type="compositionally biased region" description="Polar residues" evidence="5">
    <location>
        <begin position="362"/>
        <end position="374"/>
    </location>
</feature>
<feature type="compositionally biased region" description="Low complexity" evidence="5">
    <location>
        <begin position="384"/>
        <end position="404"/>
    </location>
</feature>
<feature type="compositionally biased region" description="Basic and acidic residues" evidence="5">
    <location>
        <begin position="415"/>
        <end position="426"/>
    </location>
</feature>
<feature type="compositionally biased region" description="Polar residues" evidence="5">
    <location>
        <begin position="444"/>
        <end position="459"/>
    </location>
</feature>
<feature type="compositionally biased region" description="Basic and acidic residues" evidence="5">
    <location>
        <begin position="464"/>
        <end position="474"/>
    </location>
</feature>
<feature type="compositionally biased region" description="Polar residues" evidence="5">
    <location>
        <begin position="482"/>
        <end position="510"/>
    </location>
</feature>
<feature type="compositionally biased region" description="Polar residues" evidence="5">
    <location>
        <begin position="519"/>
        <end position="530"/>
    </location>
</feature>
<feature type="compositionally biased region" description="Polar residues" evidence="5">
    <location>
        <begin position="540"/>
        <end position="551"/>
    </location>
</feature>
<feature type="compositionally biased region" description="Polar residues" evidence="5">
    <location>
        <begin position="644"/>
        <end position="656"/>
    </location>
</feature>
<feature type="compositionally biased region" description="Polar residues" evidence="5">
    <location>
        <begin position="663"/>
        <end position="678"/>
    </location>
</feature>
<feature type="compositionally biased region" description="Low complexity" evidence="5">
    <location>
        <begin position="754"/>
        <end position="771"/>
    </location>
</feature>
<feature type="compositionally biased region" description="Polar residues" evidence="5">
    <location>
        <begin position="778"/>
        <end position="788"/>
    </location>
</feature>
<feature type="compositionally biased region" description="Low complexity" evidence="5">
    <location>
        <begin position="901"/>
        <end position="915"/>
    </location>
</feature>
<feature type="compositionally biased region" description="Pro residues" evidence="5">
    <location>
        <begin position="1214"/>
        <end position="1223"/>
    </location>
</feature>
<feature type="compositionally biased region" description="Polar residues" evidence="5">
    <location>
        <begin position="1272"/>
        <end position="1321"/>
    </location>
</feature>
<feature type="compositionally biased region" description="Polar residues" evidence="5">
    <location>
        <begin position="1441"/>
        <end position="1457"/>
    </location>
</feature>
<feature type="compositionally biased region" description="Low complexity" evidence="5">
    <location>
        <begin position="1603"/>
        <end position="1613"/>
    </location>
</feature>
<feature type="modified residue" description="Omega-N-methylarginine" evidence="9">
    <location>
        <position position="313"/>
    </location>
</feature>
<feature type="modified residue" description="Phosphoserine" evidence="7 8">
    <location>
        <position position="465"/>
    </location>
</feature>
<feature type="modified residue" description="Phosphoserine" evidence="2">
    <location>
        <position position="714"/>
    </location>
</feature>
<feature type="modified residue" description="Phosphothreonine" evidence="2">
    <location>
        <position position="776"/>
    </location>
</feature>
<feature type="modified residue" description="Phosphoserine" evidence="2">
    <location>
        <position position="1006"/>
    </location>
</feature>
<feature type="sequence conflict" description="In Ref. 1; BAE21997." evidence="6" ref="1">
    <original>L</original>
    <variation>P</variation>
    <location>
        <position position="1521"/>
    </location>
</feature>
<protein>
    <recommendedName>
        <fullName>Trinucleotide repeat-containing gene 6C protein</fullName>
    </recommendedName>
</protein>
<proteinExistence type="evidence at protein level"/>
<organism>
    <name type="scientific">Mus musculus</name>
    <name type="common">Mouse</name>
    <dbReference type="NCBI Taxonomy" id="10090"/>
    <lineage>
        <taxon>Eukaryota</taxon>
        <taxon>Metazoa</taxon>
        <taxon>Chordata</taxon>
        <taxon>Craniata</taxon>
        <taxon>Vertebrata</taxon>
        <taxon>Euteleostomi</taxon>
        <taxon>Mammalia</taxon>
        <taxon>Eutheria</taxon>
        <taxon>Euarchontoglires</taxon>
        <taxon>Glires</taxon>
        <taxon>Rodentia</taxon>
        <taxon>Myomorpha</taxon>
        <taxon>Muroidea</taxon>
        <taxon>Muridae</taxon>
        <taxon>Murinae</taxon>
        <taxon>Mus</taxon>
        <taxon>Mus</taxon>
    </lineage>
</organism>
<comment type="function">
    <text evidence="1">Plays a role in RNA-mediated gene silencing by micro-RNAs (miRNAs). Required for miRNA-dependent translational repression of complementary mRNAs by argonaute family proteins As scaffoldng protein associates with argonaute proteins bound to partially complementary mRNAs and simultaneously can recruit CCR4-NOT and PAN deadenylase complexes (By similarity).</text>
</comment>
<comment type="subunit">
    <text evidence="1">Interacts with one or more of the argonaute family proteins AGO1, AGO2, AGO3 and AGO4. Interacts with CNOT1; the interaction mediates the association with the CCR4-NOT complex. Interacts with PAN3; the interaction mediates the association with the PAN complex (By similarity).</text>
</comment>
<comment type="domain">
    <text evidence="1">The silencing domain, also known as C-terminal effector domain (CED), can act in autonomous repression, including both translational inhibition and mRNA degradation.</text>
</comment>
<comment type="similarity">
    <text evidence="6">Belongs to the GW182 family.</text>
</comment>
<comment type="sequence caution" evidence="6">
    <conflict type="erroneous initiation">
        <sequence resource="EMBL-CDS" id="BAE27937"/>
    </conflict>
</comment>
<evidence type="ECO:0000250" key="1"/>
<evidence type="ECO:0000250" key="2">
    <source>
        <dbReference type="UniProtKB" id="Q9HCJ0"/>
    </source>
</evidence>
<evidence type="ECO:0000255" key="3"/>
<evidence type="ECO:0000255" key="4">
    <source>
        <dbReference type="PROSITE-ProRule" id="PRU00212"/>
    </source>
</evidence>
<evidence type="ECO:0000256" key="5">
    <source>
        <dbReference type="SAM" id="MobiDB-lite"/>
    </source>
</evidence>
<evidence type="ECO:0000305" key="6"/>
<evidence type="ECO:0007744" key="7">
    <source>
    </source>
</evidence>
<evidence type="ECO:0007744" key="8">
    <source>
    </source>
</evidence>
<evidence type="ECO:0007744" key="9">
    <source>
    </source>
</evidence>
<dbReference type="EMBL" id="AK047249">
    <property type="protein sequence ID" value="BAC33005.1"/>
    <property type="molecule type" value="mRNA"/>
</dbReference>
<dbReference type="EMBL" id="AK134064">
    <property type="protein sequence ID" value="BAE21997.1"/>
    <property type="molecule type" value="mRNA"/>
</dbReference>
<dbReference type="EMBL" id="AK147471">
    <property type="protein sequence ID" value="BAE27937.1"/>
    <property type="status" value="ALT_INIT"/>
    <property type="molecule type" value="mRNA"/>
</dbReference>
<dbReference type="EMBL" id="AK122529">
    <property type="protein sequence ID" value="BAC65811.1"/>
    <property type="molecule type" value="mRNA"/>
</dbReference>
<dbReference type="RefSeq" id="NP_932139.2">
    <property type="nucleotide sequence ID" value="NM_198022.2"/>
</dbReference>
<dbReference type="RefSeq" id="XP_030101766.1">
    <property type="nucleotide sequence ID" value="XM_030245906.2"/>
</dbReference>
<dbReference type="SMR" id="Q3UHC0"/>
<dbReference type="BioGRID" id="229897">
    <property type="interactions" value="4"/>
</dbReference>
<dbReference type="FunCoup" id="Q3UHC0">
    <property type="interactions" value="1846"/>
</dbReference>
<dbReference type="IntAct" id="Q3UHC0">
    <property type="interactions" value="1"/>
</dbReference>
<dbReference type="STRING" id="10090.ENSMUSP00000101951"/>
<dbReference type="GlyGen" id="Q3UHC0">
    <property type="glycosylation" value="11 sites, 1 O-linked glycan (11 sites)"/>
</dbReference>
<dbReference type="iPTMnet" id="Q3UHC0"/>
<dbReference type="PhosphoSitePlus" id="Q3UHC0"/>
<dbReference type="jPOST" id="Q3UHC0"/>
<dbReference type="PaxDb" id="10090-ENSMUSP00000101951"/>
<dbReference type="ProteomicsDB" id="259483"/>
<dbReference type="Pumba" id="Q3UHC0"/>
<dbReference type="GeneID" id="217351"/>
<dbReference type="KEGG" id="mmu:217351"/>
<dbReference type="AGR" id="MGI:2443265"/>
<dbReference type="CTD" id="57690"/>
<dbReference type="MGI" id="MGI:2443265">
    <property type="gene designation" value="Tnrc6c"/>
</dbReference>
<dbReference type="eggNOG" id="ENOG502QWFQ">
    <property type="taxonomic scope" value="Eukaryota"/>
</dbReference>
<dbReference type="InParanoid" id="Q3UHC0"/>
<dbReference type="OrthoDB" id="5919166at2759"/>
<dbReference type="Reactome" id="R-MMU-426496">
    <property type="pathway name" value="Post-transcriptional silencing by small RNAs"/>
</dbReference>
<dbReference type="BioGRID-ORCS" id="217351">
    <property type="hits" value="7 hits in 78 CRISPR screens"/>
</dbReference>
<dbReference type="ChiTaRS" id="Tnrc6c">
    <property type="organism name" value="mouse"/>
</dbReference>
<dbReference type="PRO" id="PR:Q3UHC0"/>
<dbReference type="Proteomes" id="UP000000589">
    <property type="component" value="Unplaced"/>
</dbReference>
<dbReference type="RNAct" id="Q3UHC0">
    <property type="molecule type" value="protein"/>
</dbReference>
<dbReference type="GO" id="GO:0005829">
    <property type="term" value="C:cytosol"/>
    <property type="evidence" value="ECO:0000304"/>
    <property type="project" value="Reactome"/>
</dbReference>
<dbReference type="GO" id="GO:0003723">
    <property type="term" value="F:RNA binding"/>
    <property type="evidence" value="ECO:0007669"/>
    <property type="project" value="UniProtKB-KW"/>
</dbReference>
<dbReference type="GO" id="GO:0035162">
    <property type="term" value="P:embryonic hemopoiesis"/>
    <property type="evidence" value="ECO:0000315"/>
    <property type="project" value="MGI"/>
</dbReference>
<dbReference type="GO" id="GO:0048568">
    <property type="term" value="P:embryonic organ development"/>
    <property type="evidence" value="ECO:0000315"/>
    <property type="project" value="MGI"/>
</dbReference>
<dbReference type="GO" id="GO:0007492">
    <property type="term" value="P:endoderm development"/>
    <property type="evidence" value="ECO:0000315"/>
    <property type="project" value="MGI"/>
</dbReference>
<dbReference type="GO" id="GO:0001706">
    <property type="term" value="P:endoderm formation"/>
    <property type="evidence" value="ECO:0000315"/>
    <property type="project" value="MGI"/>
</dbReference>
<dbReference type="GO" id="GO:0060430">
    <property type="term" value="P:lung saccule development"/>
    <property type="evidence" value="ECO:0000315"/>
    <property type="project" value="MGI"/>
</dbReference>
<dbReference type="GO" id="GO:1900153">
    <property type="term" value="P:positive regulation of nuclear-transcribed mRNA catabolic process, deadenylation-dependent decay"/>
    <property type="evidence" value="ECO:0000250"/>
    <property type="project" value="UniProtKB"/>
</dbReference>
<dbReference type="GO" id="GO:0060213">
    <property type="term" value="P:positive regulation of nuclear-transcribed mRNA poly(A) tail shortening"/>
    <property type="evidence" value="ECO:0000250"/>
    <property type="project" value="UniProtKB"/>
</dbReference>
<dbReference type="GO" id="GO:0060964">
    <property type="term" value="P:regulation of miRNA-mediated gene silencing"/>
    <property type="evidence" value="ECO:0000315"/>
    <property type="project" value="MGI"/>
</dbReference>
<dbReference type="GO" id="GO:0006417">
    <property type="term" value="P:regulation of translation"/>
    <property type="evidence" value="ECO:0007669"/>
    <property type="project" value="UniProtKB-KW"/>
</dbReference>
<dbReference type="GO" id="GO:0031047">
    <property type="term" value="P:regulatory ncRNA-mediated gene silencing"/>
    <property type="evidence" value="ECO:0007669"/>
    <property type="project" value="UniProtKB-KW"/>
</dbReference>
<dbReference type="GO" id="GO:0007179">
    <property type="term" value="P:transforming growth factor beta receptor signaling pathway"/>
    <property type="evidence" value="ECO:0000315"/>
    <property type="project" value="MGI"/>
</dbReference>
<dbReference type="CDD" id="cd12713">
    <property type="entry name" value="RRM_TNRC6C"/>
    <property type="match status" value="1"/>
</dbReference>
<dbReference type="CDD" id="cd14283">
    <property type="entry name" value="UBA_TNR6C"/>
    <property type="match status" value="1"/>
</dbReference>
<dbReference type="FunFam" id="3.30.70.330:FF:000011">
    <property type="entry name" value="trinucleotide repeat-containing gene 6A protein-like"/>
    <property type="match status" value="1"/>
</dbReference>
<dbReference type="FunFam" id="1.10.8.10:FF:000027">
    <property type="entry name" value="Trinucleotide repeat-containing gene 6C protein"/>
    <property type="match status" value="1"/>
</dbReference>
<dbReference type="Gene3D" id="3.30.70.330">
    <property type="match status" value="1"/>
</dbReference>
<dbReference type="Gene3D" id="1.10.8.10">
    <property type="entry name" value="DNA helicase RuvA subunit, C-terminal domain"/>
    <property type="match status" value="1"/>
</dbReference>
<dbReference type="InterPro" id="IPR019486">
    <property type="entry name" value="Argonaute_hook_dom"/>
</dbReference>
<dbReference type="InterPro" id="IPR052068">
    <property type="entry name" value="GW182_domain"/>
</dbReference>
<dbReference type="InterPro" id="IPR026805">
    <property type="entry name" value="GW182_M_dom"/>
</dbReference>
<dbReference type="InterPro" id="IPR012677">
    <property type="entry name" value="Nucleotide-bd_a/b_plait_sf"/>
</dbReference>
<dbReference type="InterPro" id="IPR035979">
    <property type="entry name" value="RBD_domain_sf"/>
</dbReference>
<dbReference type="InterPro" id="IPR000504">
    <property type="entry name" value="RRM_dom"/>
</dbReference>
<dbReference type="InterPro" id="IPR041917">
    <property type="entry name" value="TNR6C_UBA"/>
</dbReference>
<dbReference type="InterPro" id="IPR032226">
    <property type="entry name" value="TNRC6_PABC-bd"/>
</dbReference>
<dbReference type="InterPro" id="IPR034927">
    <property type="entry name" value="TNRC6C_RRM"/>
</dbReference>
<dbReference type="InterPro" id="IPR015940">
    <property type="entry name" value="UBA"/>
</dbReference>
<dbReference type="InterPro" id="IPR009060">
    <property type="entry name" value="UBA-like_sf"/>
</dbReference>
<dbReference type="PANTHER" id="PTHR13020">
    <property type="entry name" value="TRINUCLEOTIDE REPEAT-CONTAINING GENE 6"/>
    <property type="match status" value="1"/>
</dbReference>
<dbReference type="PANTHER" id="PTHR13020:SF9">
    <property type="entry name" value="TRINUCLEOTIDE REPEAT-CONTAINING GENE 6C PROTEIN"/>
    <property type="match status" value="1"/>
</dbReference>
<dbReference type="Pfam" id="PF10427">
    <property type="entry name" value="Ago_hook"/>
    <property type="match status" value="1"/>
</dbReference>
<dbReference type="Pfam" id="PF12938">
    <property type="entry name" value="M_domain"/>
    <property type="match status" value="1"/>
</dbReference>
<dbReference type="Pfam" id="PF00076">
    <property type="entry name" value="RRM_1"/>
    <property type="match status" value="1"/>
</dbReference>
<dbReference type="Pfam" id="PF16608">
    <property type="entry name" value="TNRC6-PABC_bdg"/>
    <property type="match status" value="2"/>
</dbReference>
<dbReference type="SMART" id="SM00165">
    <property type="entry name" value="UBA"/>
    <property type="match status" value="1"/>
</dbReference>
<dbReference type="SUPFAM" id="SSF54928">
    <property type="entry name" value="RNA-binding domain, RBD"/>
    <property type="match status" value="1"/>
</dbReference>
<dbReference type="SUPFAM" id="SSF46934">
    <property type="entry name" value="UBA-like"/>
    <property type="match status" value="1"/>
</dbReference>
<dbReference type="PROSITE" id="PS50030">
    <property type="entry name" value="UBA"/>
    <property type="match status" value="1"/>
</dbReference>
<name>TNR6C_MOUSE</name>